<dbReference type="EC" id="4.1.1.39" evidence="1"/>
<dbReference type="EMBL" id="U19500">
    <property type="protein sequence ID" value="AAA69472.1"/>
    <property type="molecule type" value="Genomic_DNA"/>
</dbReference>
<dbReference type="GO" id="GO:0009507">
    <property type="term" value="C:chloroplast"/>
    <property type="evidence" value="ECO:0007669"/>
    <property type="project" value="UniProtKB-SubCell"/>
</dbReference>
<dbReference type="GO" id="GO:0000287">
    <property type="term" value="F:magnesium ion binding"/>
    <property type="evidence" value="ECO:0007669"/>
    <property type="project" value="InterPro"/>
</dbReference>
<dbReference type="GO" id="GO:0004497">
    <property type="term" value="F:monooxygenase activity"/>
    <property type="evidence" value="ECO:0007669"/>
    <property type="project" value="UniProtKB-KW"/>
</dbReference>
<dbReference type="GO" id="GO:0016984">
    <property type="term" value="F:ribulose-bisphosphate carboxylase activity"/>
    <property type="evidence" value="ECO:0007669"/>
    <property type="project" value="UniProtKB-EC"/>
</dbReference>
<dbReference type="GO" id="GO:0009853">
    <property type="term" value="P:photorespiration"/>
    <property type="evidence" value="ECO:0007669"/>
    <property type="project" value="UniProtKB-KW"/>
</dbReference>
<dbReference type="GO" id="GO:0019253">
    <property type="term" value="P:reductive pentose-phosphate cycle"/>
    <property type="evidence" value="ECO:0007669"/>
    <property type="project" value="UniProtKB-KW"/>
</dbReference>
<dbReference type="CDD" id="cd08212">
    <property type="entry name" value="RuBisCO_large_I"/>
    <property type="match status" value="1"/>
</dbReference>
<dbReference type="FunFam" id="3.20.20.110:FF:000003">
    <property type="entry name" value="Ribulose bisphosphate carboxylase large chain"/>
    <property type="match status" value="1"/>
</dbReference>
<dbReference type="FunFam" id="3.30.70.150:FF:000001">
    <property type="entry name" value="Ribulose bisphosphate carboxylase large chain"/>
    <property type="match status" value="1"/>
</dbReference>
<dbReference type="Gene3D" id="3.20.20.110">
    <property type="entry name" value="Ribulose bisphosphate carboxylase, large subunit, C-terminal domain"/>
    <property type="match status" value="1"/>
</dbReference>
<dbReference type="Gene3D" id="3.30.70.150">
    <property type="entry name" value="RuBisCO large subunit, N-terminal domain"/>
    <property type="match status" value="1"/>
</dbReference>
<dbReference type="HAMAP" id="MF_01338">
    <property type="entry name" value="RuBisCO_L_type1"/>
    <property type="match status" value="1"/>
</dbReference>
<dbReference type="InterPro" id="IPR033966">
    <property type="entry name" value="RuBisCO"/>
</dbReference>
<dbReference type="InterPro" id="IPR020878">
    <property type="entry name" value="RuBisCo_large_chain_AS"/>
</dbReference>
<dbReference type="InterPro" id="IPR000685">
    <property type="entry name" value="RuBisCO_lsu_C"/>
</dbReference>
<dbReference type="InterPro" id="IPR036376">
    <property type="entry name" value="RuBisCO_lsu_C_sf"/>
</dbReference>
<dbReference type="InterPro" id="IPR017443">
    <property type="entry name" value="RuBisCO_lsu_fd_N"/>
</dbReference>
<dbReference type="InterPro" id="IPR036422">
    <property type="entry name" value="RuBisCO_lsu_N_sf"/>
</dbReference>
<dbReference type="InterPro" id="IPR020888">
    <property type="entry name" value="RuBisCO_lsuI"/>
</dbReference>
<dbReference type="NCBIfam" id="NF003252">
    <property type="entry name" value="PRK04208.1"/>
    <property type="match status" value="1"/>
</dbReference>
<dbReference type="PANTHER" id="PTHR42704">
    <property type="entry name" value="RIBULOSE BISPHOSPHATE CARBOXYLASE"/>
    <property type="match status" value="1"/>
</dbReference>
<dbReference type="PANTHER" id="PTHR42704:SF17">
    <property type="entry name" value="RIBULOSE BISPHOSPHATE CARBOXYLASE LARGE CHAIN"/>
    <property type="match status" value="1"/>
</dbReference>
<dbReference type="Pfam" id="PF00016">
    <property type="entry name" value="RuBisCO_large"/>
    <property type="match status" value="1"/>
</dbReference>
<dbReference type="Pfam" id="PF02788">
    <property type="entry name" value="RuBisCO_large_N"/>
    <property type="match status" value="1"/>
</dbReference>
<dbReference type="SFLD" id="SFLDG01052">
    <property type="entry name" value="RuBisCO"/>
    <property type="match status" value="1"/>
</dbReference>
<dbReference type="SFLD" id="SFLDS00014">
    <property type="entry name" value="RuBisCO"/>
    <property type="match status" value="1"/>
</dbReference>
<dbReference type="SFLD" id="SFLDG00301">
    <property type="entry name" value="RuBisCO-like_proteins"/>
    <property type="match status" value="1"/>
</dbReference>
<dbReference type="SUPFAM" id="SSF51649">
    <property type="entry name" value="RuBisCo, C-terminal domain"/>
    <property type="match status" value="1"/>
</dbReference>
<dbReference type="SUPFAM" id="SSF54966">
    <property type="entry name" value="RuBisCO, large subunit, small (N-terminal) domain"/>
    <property type="match status" value="1"/>
</dbReference>
<dbReference type="PROSITE" id="PS00157">
    <property type="entry name" value="RUBISCO_LARGE"/>
    <property type="match status" value="1"/>
</dbReference>
<protein>
    <recommendedName>
        <fullName evidence="1">Ribulose bisphosphate carboxylase large chain</fullName>
        <shortName evidence="1">RuBisCO large subunit</shortName>
        <ecNumber evidence="1">4.1.1.39</ecNumber>
    </recommendedName>
</protein>
<comment type="function">
    <text evidence="1">RuBisCO catalyzes two reactions: the carboxylation of D-ribulose 1,5-bisphosphate, the primary event in carbon dioxide fixation, as well as the oxidative fragmentation of the pentose substrate in the photorespiration process. Both reactions occur simultaneously and in competition at the same active site.</text>
</comment>
<comment type="catalytic activity">
    <reaction evidence="1">
        <text>2 (2R)-3-phosphoglycerate + 2 H(+) = D-ribulose 1,5-bisphosphate + CO2 + H2O</text>
        <dbReference type="Rhea" id="RHEA:23124"/>
        <dbReference type="ChEBI" id="CHEBI:15377"/>
        <dbReference type="ChEBI" id="CHEBI:15378"/>
        <dbReference type="ChEBI" id="CHEBI:16526"/>
        <dbReference type="ChEBI" id="CHEBI:57870"/>
        <dbReference type="ChEBI" id="CHEBI:58272"/>
        <dbReference type="EC" id="4.1.1.39"/>
    </reaction>
</comment>
<comment type="catalytic activity">
    <reaction evidence="1">
        <text>D-ribulose 1,5-bisphosphate + O2 = 2-phosphoglycolate + (2R)-3-phosphoglycerate + 2 H(+)</text>
        <dbReference type="Rhea" id="RHEA:36631"/>
        <dbReference type="ChEBI" id="CHEBI:15378"/>
        <dbReference type="ChEBI" id="CHEBI:15379"/>
        <dbReference type="ChEBI" id="CHEBI:57870"/>
        <dbReference type="ChEBI" id="CHEBI:58033"/>
        <dbReference type="ChEBI" id="CHEBI:58272"/>
    </reaction>
</comment>
<comment type="cofactor">
    <cofactor evidence="1">
        <name>Mg(2+)</name>
        <dbReference type="ChEBI" id="CHEBI:18420"/>
    </cofactor>
    <text evidence="1">Binds 1 Mg(2+) ion per subunit.</text>
</comment>
<comment type="subunit">
    <text evidence="1">Heterohexadecamer of 8 large chains and 8 small chains; disulfide-linked. The disulfide link is formed within the large subunit homodimers.</text>
</comment>
<comment type="subcellular location">
    <subcellularLocation>
        <location>Plastid</location>
        <location>Chloroplast</location>
    </subcellularLocation>
</comment>
<comment type="PTM">
    <text evidence="1">The disulfide bond which can form in the large chain dimeric partners within the hexadecamer appears to be associated with oxidative stress and protein turnover.</text>
</comment>
<comment type="miscellaneous">
    <text evidence="1">The basic functional RuBisCO is composed of a large chain homodimer in a 'head-to-tail' conformation. In form I RuBisCO this homodimer is arranged in a barrel-like tetramer with the small subunits forming a tetrameric 'cap' on each end of the 'barrel'.</text>
</comment>
<comment type="similarity">
    <text evidence="1">Belongs to the RuBisCO large chain family. Type I subfamily.</text>
</comment>
<name>RBL_ARGDE</name>
<sequence>GVGFKAGVKDYRLTYYTPEYKTKDTDILAAFRMTPQPGVPAEERGAAVAAESSTGTWTTVQTDGLTSLDRYKGRCYDIEPVAGEENQYIAYVAYPLDLFEEGSVTNMLTSIVGNVFGFKALRALXXEDLRIPPAYSKTFIGPPHGIQVERDKLNKYGRPLLGCTIKPKLGLSAKNYGRAVYECLRGGLDFTKDDENVNSQPFMRWRDRFLFVAEALFKSQAETGEIKGHYLNATAGTCEEMMKRAVFARELGVPIVMHDYLTGGFTANTSLAFYCRDNGLLLHIHRAMHAVIDRPRNHGIHFRVLAKALRMSGGDHIHAGTVVGKLEGEREVTLGFVDLLRDDYIEKDRSRGIYFTQDWVSMPGVLPVASGGIHVWHMPALTEIFGDDSVLQFGGGTLGHPWGNAPGAVANRVALEACVQARNEGRDLAREGNEIIREASK</sequence>
<reference key="1">
    <citation type="submission" date="1995-07" db="EMBL/GenBank/DDBJ databases">
        <authorList>
            <person name="Gastony G.J."/>
        </authorList>
    </citation>
    <scope>NUCLEOTIDE SEQUENCE [GENOMIC DNA]</scope>
</reference>
<evidence type="ECO:0000255" key="1">
    <source>
        <dbReference type="HAMAP-Rule" id="MF_01338"/>
    </source>
</evidence>
<proteinExistence type="inferred from homology"/>
<accession>Q32663</accession>
<feature type="chain" id="PRO_0000062542" description="Ribulose bisphosphate carboxylase large chain">
    <location>
        <begin position="1" status="less than"/>
        <end position="441" status="greater than"/>
    </location>
</feature>
<feature type="active site" description="Proton acceptor" evidence="1">
    <location>
        <position position="166"/>
    </location>
</feature>
<feature type="active site" description="Proton acceptor" evidence="1">
    <location>
        <position position="285"/>
    </location>
</feature>
<feature type="binding site" description="in homodimeric partner" evidence="1">
    <location>
        <position position="114"/>
    </location>
    <ligand>
        <name>substrate</name>
    </ligand>
</feature>
<feature type="binding site" evidence="1">
    <location>
        <position position="164"/>
    </location>
    <ligand>
        <name>substrate</name>
    </ligand>
</feature>
<feature type="binding site" evidence="1">
    <location>
        <position position="168"/>
    </location>
    <ligand>
        <name>substrate</name>
    </ligand>
</feature>
<feature type="binding site" description="via carbamate group" evidence="1">
    <location>
        <position position="192"/>
    </location>
    <ligand>
        <name>Mg(2+)</name>
        <dbReference type="ChEBI" id="CHEBI:18420"/>
    </ligand>
</feature>
<feature type="binding site" evidence="1">
    <location>
        <position position="194"/>
    </location>
    <ligand>
        <name>Mg(2+)</name>
        <dbReference type="ChEBI" id="CHEBI:18420"/>
    </ligand>
</feature>
<feature type="binding site" evidence="1">
    <location>
        <position position="195"/>
    </location>
    <ligand>
        <name>Mg(2+)</name>
        <dbReference type="ChEBI" id="CHEBI:18420"/>
    </ligand>
</feature>
<feature type="binding site" evidence="1">
    <location>
        <position position="286"/>
    </location>
    <ligand>
        <name>substrate</name>
    </ligand>
</feature>
<feature type="binding site" evidence="1">
    <location>
        <position position="318"/>
    </location>
    <ligand>
        <name>substrate</name>
    </ligand>
</feature>
<feature type="binding site" evidence="1">
    <location>
        <position position="370"/>
    </location>
    <ligand>
        <name>substrate</name>
    </ligand>
</feature>
<feature type="site" description="Transition state stabilizer" evidence="1">
    <location>
        <position position="325"/>
    </location>
</feature>
<feature type="modified residue" description="N6,N6,N6-trimethyllysine" evidence="1">
    <location>
        <position position="5"/>
    </location>
</feature>
<feature type="modified residue" description="N6-carboxylysine" evidence="1">
    <location>
        <position position="192"/>
    </location>
</feature>
<feature type="disulfide bond" description="Interchain; in linked form" evidence="1">
    <location>
        <position position="238"/>
    </location>
</feature>
<feature type="non-terminal residue">
    <location>
        <position position="1"/>
    </location>
</feature>
<feature type="non-terminal residue">
    <location>
        <position position="441"/>
    </location>
</feature>
<geneLocation type="chloroplast"/>
<organism>
    <name type="scientific">Argyrochosma delicatula</name>
    <name type="common">Delicate cloak fern</name>
    <name type="synonym">Notholaena delicatula</name>
    <dbReference type="NCBI Taxonomy" id="37460"/>
    <lineage>
        <taxon>Eukaryota</taxon>
        <taxon>Viridiplantae</taxon>
        <taxon>Streptophyta</taxon>
        <taxon>Embryophyta</taxon>
        <taxon>Tracheophyta</taxon>
        <taxon>Polypodiopsida</taxon>
        <taxon>Polypodiidae</taxon>
        <taxon>Polypodiales</taxon>
        <taxon>Pteridineae</taxon>
        <taxon>Pteridaceae</taxon>
        <taxon>Cheilanthoideae</taxon>
        <taxon>Argyrochosma</taxon>
    </lineage>
</organism>
<keyword id="KW-0113">Calvin cycle</keyword>
<keyword id="KW-0120">Carbon dioxide fixation</keyword>
<keyword id="KW-0150">Chloroplast</keyword>
<keyword id="KW-1015">Disulfide bond</keyword>
<keyword id="KW-0456">Lyase</keyword>
<keyword id="KW-0460">Magnesium</keyword>
<keyword id="KW-0479">Metal-binding</keyword>
<keyword id="KW-0488">Methylation</keyword>
<keyword id="KW-0503">Monooxygenase</keyword>
<keyword id="KW-0560">Oxidoreductase</keyword>
<keyword id="KW-0601">Photorespiration</keyword>
<keyword id="KW-0602">Photosynthesis</keyword>
<keyword id="KW-0934">Plastid</keyword>
<gene>
    <name evidence="1" type="primary">rbcL</name>
</gene>